<protein>
    <recommendedName>
        <fullName evidence="1">Ribosomal protein L11 methyltransferase</fullName>
        <shortName evidence="1">L11 Mtase</shortName>
        <ecNumber evidence="1">2.1.1.-</ecNumber>
    </recommendedName>
</protein>
<organism>
    <name type="scientific">Staphylococcus aureus</name>
    <dbReference type="NCBI Taxonomy" id="1280"/>
    <lineage>
        <taxon>Bacteria</taxon>
        <taxon>Bacillati</taxon>
        <taxon>Bacillota</taxon>
        <taxon>Bacilli</taxon>
        <taxon>Bacillales</taxon>
        <taxon>Staphylococcaceae</taxon>
        <taxon>Staphylococcus</taxon>
    </lineage>
</organism>
<dbReference type="EC" id="2.1.1.-" evidence="1"/>
<dbReference type="EMBL" id="D30690">
    <property type="protein sequence ID" value="BAA06361.1"/>
    <property type="molecule type" value="Genomic_DNA"/>
</dbReference>
<dbReference type="RefSeq" id="WP_001104607.1">
    <property type="nucleotide sequence ID" value="NZ_WYDB01000002.1"/>
</dbReference>
<dbReference type="SMR" id="P0A0P5"/>
<dbReference type="OMA" id="MYYEFFF"/>
<dbReference type="GO" id="GO:0005737">
    <property type="term" value="C:cytoplasm"/>
    <property type="evidence" value="ECO:0007669"/>
    <property type="project" value="UniProtKB-SubCell"/>
</dbReference>
<dbReference type="GO" id="GO:0016279">
    <property type="term" value="F:protein-lysine N-methyltransferase activity"/>
    <property type="evidence" value="ECO:0007669"/>
    <property type="project" value="RHEA"/>
</dbReference>
<dbReference type="GO" id="GO:0032259">
    <property type="term" value="P:methylation"/>
    <property type="evidence" value="ECO:0007669"/>
    <property type="project" value="UniProtKB-KW"/>
</dbReference>
<dbReference type="CDD" id="cd02440">
    <property type="entry name" value="AdoMet_MTases"/>
    <property type="match status" value="1"/>
</dbReference>
<dbReference type="Gene3D" id="3.40.50.150">
    <property type="entry name" value="Vaccinia Virus protein VP39"/>
    <property type="match status" value="1"/>
</dbReference>
<dbReference type="HAMAP" id="MF_00735">
    <property type="entry name" value="Methyltr_PrmA"/>
    <property type="match status" value="1"/>
</dbReference>
<dbReference type="InterPro" id="IPR050078">
    <property type="entry name" value="Ribosomal_L11_MeTrfase_PrmA"/>
</dbReference>
<dbReference type="InterPro" id="IPR004498">
    <property type="entry name" value="Ribosomal_PrmA_MeTrfase"/>
</dbReference>
<dbReference type="InterPro" id="IPR029063">
    <property type="entry name" value="SAM-dependent_MTases_sf"/>
</dbReference>
<dbReference type="NCBIfam" id="TIGR00406">
    <property type="entry name" value="prmA"/>
    <property type="match status" value="1"/>
</dbReference>
<dbReference type="PANTHER" id="PTHR43648">
    <property type="entry name" value="ELECTRON TRANSFER FLAVOPROTEIN BETA SUBUNIT LYSINE METHYLTRANSFERASE"/>
    <property type="match status" value="1"/>
</dbReference>
<dbReference type="PANTHER" id="PTHR43648:SF1">
    <property type="entry name" value="ELECTRON TRANSFER FLAVOPROTEIN BETA SUBUNIT LYSINE METHYLTRANSFERASE"/>
    <property type="match status" value="1"/>
</dbReference>
<dbReference type="Pfam" id="PF06325">
    <property type="entry name" value="PrmA"/>
    <property type="match status" value="1"/>
</dbReference>
<dbReference type="PIRSF" id="PIRSF000401">
    <property type="entry name" value="RPL11_MTase"/>
    <property type="match status" value="1"/>
</dbReference>
<dbReference type="SUPFAM" id="SSF53335">
    <property type="entry name" value="S-adenosyl-L-methionine-dependent methyltransferases"/>
    <property type="match status" value="1"/>
</dbReference>
<name>PRMA_STAAU</name>
<accession>P0A0P5</accession>
<accession>P45557</accession>
<gene>
    <name evidence="1" type="primary">prmA</name>
</gene>
<keyword id="KW-0963">Cytoplasm</keyword>
<keyword id="KW-0489">Methyltransferase</keyword>
<keyword id="KW-0949">S-adenosyl-L-methionine</keyword>
<keyword id="KW-0346">Stress response</keyword>
<keyword id="KW-0808">Transferase</keyword>
<comment type="function">
    <text evidence="1">Methylates ribosomal protein L11.</text>
</comment>
<comment type="catalytic activity">
    <reaction evidence="1">
        <text>L-lysyl-[protein] + 3 S-adenosyl-L-methionine = N(6),N(6),N(6)-trimethyl-L-lysyl-[protein] + 3 S-adenosyl-L-homocysteine + 3 H(+)</text>
        <dbReference type="Rhea" id="RHEA:54192"/>
        <dbReference type="Rhea" id="RHEA-COMP:9752"/>
        <dbReference type="Rhea" id="RHEA-COMP:13826"/>
        <dbReference type="ChEBI" id="CHEBI:15378"/>
        <dbReference type="ChEBI" id="CHEBI:29969"/>
        <dbReference type="ChEBI" id="CHEBI:57856"/>
        <dbReference type="ChEBI" id="CHEBI:59789"/>
        <dbReference type="ChEBI" id="CHEBI:61961"/>
    </reaction>
</comment>
<comment type="subcellular location">
    <subcellularLocation>
        <location evidence="1">Cytoplasm</location>
    </subcellularLocation>
</comment>
<comment type="induction">
    <text>By heat shock.</text>
</comment>
<comment type="similarity">
    <text evidence="1 2">Belongs to the methyltransferase superfamily. PrmA family.</text>
</comment>
<proteinExistence type="evidence at transcript level"/>
<evidence type="ECO:0000255" key="1">
    <source>
        <dbReference type="HAMAP-Rule" id="MF_00735"/>
    </source>
</evidence>
<evidence type="ECO:0000305" key="2"/>
<sequence length="312" mass="35527">MNWTELSIIINHEAVELATNILENHGSNGVVIEDSDDLINQPEDKYGEIYALKKEDYPDKGVRLKAYFNEMTYDDKLRQQIKDELLNLDELDQHNIQFSEQIIAETDWENEWKNYFHPFRASKKFTIVPSWETYAKEADEELCIELDPGMAFGTGDHPTTSMCLKAIETYVLPQHSVIDVGTGSGILSIASHLIGVKRIKALDIDEMAVSVAKENFRRNHCETLIEAVPGNLLKDETEKFDIVIANILAHIIDEMIEDAYNTLNEGGYFITSGIIKEKYEGIQSHMERVGFKIISEQHDNGWVCLVGQKVSE</sequence>
<feature type="chain" id="PRO_0000192307" description="Ribosomal protein L11 methyltransferase">
    <location>
        <begin position="1"/>
        <end position="312"/>
    </location>
</feature>
<feature type="binding site" evidence="1">
    <location>
        <position position="160"/>
    </location>
    <ligand>
        <name>S-adenosyl-L-methionine</name>
        <dbReference type="ChEBI" id="CHEBI:59789"/>
    </ligand>
</feature>
<feature type="binding site" evidence="1">
    <location>
        <position position="181"/>
    </location>
    <ligand>
        <name>S-adenosyl-L-methionine</name>
        <dbReference type="ChEBI" id="CHEBI:59789"/>
    </ligand>
</feature>
<feature type="binding site" evidence="1">
    <location>
        <position position="203"/>
    </location>
    <ligand>
        <name>S-adenosyl-L-methionine</name>
        <dbReference type="ChEBI" id="CHEBI:59789"/>
    </ligand>
</feature>
<feature type="binding site" evidence="1">
    <location>
        <position position="246"/>
    </location>
    <ligand>
        <name>S-adenosyl-L-methionine</name>
        <dbReference type="ChEBI" id="CHEBI:59789"/>
    </ligand>
</feature>
<reference key="1">
    <citation type="journal article" date="1994" name="J. Bacteriol.">
        <title>Molecular cloning of two new heat shock genes related to the hsp70 genes in Staphylococcus aureus.</title>
        <authorList>
            <person name="Ohta T."/>
            <person name="Saito K."/>
            <person name="Kuroda M."/>
            <person name="Honda K."/>
            <person name="Hirata H."/>
            <person name="Hayashi H."/>
        </authorList>
    </citation>
    <scope>NUCLEOTIDE SEQUENCE [GENOMIC DNA]</scope>
    <source>
        <strain>912</strain>
    </source>
</reference>